<name>OR8G1_HUMAN</name>
<comment type="function">
    <text evidence="3">Odorant receptor.</text>
</comment>
<comment type="subcellular location">
    <subcellularLocation>
        <location>Cell membrane</location>
        <topology>Multi-pass membrane protein</topology>
    </subcellularLocation>
</comment>
<comment type="polymorphism">
    <text>A stop codon in the gene coding for this protein at position Tyr-259 is responsible for functional diversity, thus producing a pseudogene.</text>
</comment>
<comment type="similarity">
    <text evidence="2">Belongs to the G-protein coupled receptor 1 family.</text>
</comment>
<comment type="online information" name="Human Olfactory Receptor Data Exploratorium (HORDE)">
    <link uri="http://genome.weizmann.ac.il/horde/card/index/symbol:OR8G1"/>
</comment>
<keyword id="KW-1003">Cell membrane</keyword>
<keyword id="KW-1015">Disulfide bond</keyword>
<keyword id="KW-0297">G-protein coupled receptor</keyword>
<keyword id="KW-0325">Glycoprotein</keyword>
<keyword id="KW-0472">Membrane</keyword>
<keyword id="KW-0552">Olfaction</keyword>
<keyword id="KW-0675">Receptor</keyword>
<keyword id="KW-1185">Reference proteome</keyword>
<keyword id="KW-0716">Sensory transduction</keyword>
<keyword id="KW-0807">Transducer</keyword>
<keyword id="KW-0812">Transmembrane</keyword>
<keyword id="KW-1133">Transmembrane helix</keyword>
<evidence type="ECO:0000255" key="1"/>
<evidence type="ECO:0000255" key="2">
    <source>
        <dbReference type="PROSITE-ProRule" id="PRU00521"/>
    </source>
</evidence>
<evidence type="ECO:0000305" key="3"/>
<proteinExistence type="evidence at transcript level"/>
<feature type="chain" id="PRO_0000150662" description="Olfactory receptor 8G1">
    <location>
        <begin position="1"/>
        <end position="311"/>
    </location>
</feature>
<feature type="topological domain" description="Extracellular" evidence="1">
    <location>
        <begin position="1"/>
        <end position="25"/>
    </location>
</feature>
<feature type="transmembrane region" description="Helical; Name=1" evidence="1">
    <location>
        <begin position="26"/>
        <end position="46"/>
    </location>
</feature>
<feature type="topological domain" description="Cytoplasmic" evidence="1">
    <location>
        <begin position="47"/>
        <end position="54"/>
    </location>
</feature>
<feature type="transmembrane region" description="Helical; Name=2" evidence="1">
    <location>
        <begin position="55"/>
        <end position="75"/>
    </location>
</feature>
<feature type="topological domain" description="Extracellular" evidence="1">
    <location>
        <begin position="76"/>
        <end position="99"/>
    </location>
</feature>
<feature type="transmembrane region" description="Helical; Name=3" evidence="1">
    <location>
        <begin position="100"/>
        <end position="120"/>
    </location>
</feature>
<feature type="topological domain" description="Cytoplasmic" evidence="1">
    <location>
        <begin position="121"/>
        <end position="139"/>
    </location>
</feature>
<feature type="transmembrane region" description="Helical; Name=4" evidence="1">
    <location>
        <begin position="140"/>
        <end position="160"/>
    </location>
</feature>
<feature type="topological domain" description="Extracellular" evidence="1">
    <location>
        <begin position="161"/>
        <end position="197"/>
    </location>
</feature>
<feature type="transmembrane region" description="Helical; Name=5" evidence="1">
    <location>
        <begin position="198"/>
        <end position="217"/>
    </location>
</feature>
<feature type="topological domain" description="Cytoplasmic" evidence="1">
    <location>
        <begin position="218"/>
        <end position="237"/>
    </location>
</feature>
<feature type="transmembrane region" description="Helical; Name=6" evidence="1">
    <location>
        <begin position="238"/>
        <end position="258"/>
    </location>
</feature>
<feature type="topological domain" description="Extracellular" evidence="1">
    <location>
        <begin position="259"/>
        <end position="271"/>
    </location>
</feature>
<feature type="transmembrane region" description="Helical; Name=7" evidence="1">
    <location>
        <begin position="272"/>
        <end position="292"/>
    </location>
</feature>
<feature type="topological domain" description="Cytoplasmic" evidence="1">
    <location>
        <begin position="293"/>
        <end position="311"/>
    </location>
</feature>
<feature type="glycosylation site" description="N-linked (GlcNAc...) asparagine" evidence="1">
    <location>
        <position position="5"/>
    </location>
</feature>
<feature type="glycosylation site" description="N-linked (GlcNAc...) asparagine" evidence="1">
    <location>
        <position position="6"/>
    </location>
</feature>
<feature type="disulfide bond" evidence="2">
    <location>
        <begin position="97"/>
        <end position="189"/>
    </location>
</feature>
<feature type="sequence variant" id="VAR_034260" description="In dbSNP:rs4482039.">
    <original>A</original>
    <variation>V</variation>
    <location>
        <position position="247"/>
    </location>
</feature>
<reference key="1">
    <citation type="submission" date="2001-07" db="EMBL/GenBank/DDBJ databases">
        <title>Genome-wide discovery and analysis of human seven transmembrane helix receptor genes.</title>
        <authorList>
            <person name="Suwa M."/>
            <person name="Sato T."/>
            <person name="Okouchi I."/>
            <person name="Arita M."/>
            <person name="Futami K."/>
            <person name="Matsumoto S."/>
            <person name="Tsutsumi S."/>
            <person name="Aburatani H."/>
            <person name="Asai K."/>
            <person name="Akiyama Y."/>
        </authorList>
    </citation>
    <scope>NUCLEOTIDE SEQUENCE [GENOMIC DNA]</scope>
</reference>
<reference key="2">
    <citation type="journal article" date="1997" name="Genomics">
        <title>Specific repertoire of olfactory receptor genes in the male germ cells of several mammalian species.</title>
        <authorList>
            <person name="Vanderhaeghen P."/>
            <person name="Schurmans S."/>
            <person name="Vassart G."/>
            <person name="Parmentier M."/>
        </authorList>
    </citation>
    <scope>NUCLEOTIDE SEQUENCE [MRNA] OF 126-282</scope>
    <source>
        <tissue>Testis</tissue>
    </source>
</reference>
<reference key="3">
    <citation type="journal article" date="2002" name="Genomics">
        <title>DEFOG: a practical scheme for deciphering families of genes.</title>
        <authorList>
            <person name="Fuchs T."/>
            <person name="Malecova B."/>
            <person name="Linhart C."/>
            <person name="Sharan R."/>
            <person name="Khen M."/>
            <person name="Herwig R."/>
            <person name="Shmulevich D."/>
            <person name="Elkon R."/>
            <person name="Steinfath M."/>
            <person name="O'Brien J.K."/>
            <person name="Radelof U."/>
            <person name="Lehrach H."/>
            <person name="Lancet D."/>
            <person name="Shamir R."/>
        </authorList>
    </citation>
    <scope>NUCLEOTIDE SEQUENCE [GENOMIC DNA] OF 126-282</scope>
</reference>
<reference key="4">
    <citation type="journal article" date="2004" name="Proc. Natl. Acad. Sci. U.S.A.">
        <title>The human olfactory receptor gene family.</title>
        <authorList>
            <person name="Malnic B."/>
            <person name="Godfrey P.A."/>
            <person name="Buck L.B."/>
        </authorList>
    </citation>
    <scope>IDENTIFICATION</scope>
</reference>
<reference key="5">
    <citation type="journal article" date="2004" name="Proc. Natl. Acad. Sci. U.S.A.">
        <authorList>
            <person name="Malnic B."/>
            <person name="Godfrey P.A."/>
            <person name="Buck L.B."/>
        </authorList>
    </citation>
    <scope>ERRATUM OF PUBMED:14983052</scope>
</reference>
<reference key="6">
    <citation type="journal article" date="2007" name="PLoS Biol.">
        <title>Genetic elucidation of human hyperosmia to isovaleric acid.</title>
        <authorList>
            <person name="Menashe I."/>
            <person name="Abaffy T."/>
            <person name="Hasin Y."/>
            <person name="Goshen S."/>
            <person name="Yahalom V."/>
            <person name="Luetje C.W."/>
            <person name="Lancet D."/>
        </authorList>
    </citation>
    <scope>POLYMORPHISM</scope>
</reference>
<protein>
    <recommendedName>
        <fullName>Olfactory receptor 8G1</fullName>
    </recommendedName>
    <alternativeName>
        <fullName>Olfactory receptor OR11-281</fullName>
    </alternativeName>
    <alternativeName>
        <fullName>Olfactory receptor TPCR25</fullName>
    </alternativeName>
</protein>
<accession>Q15617</accession>
<accession>Q8NG88</accession>
<sequence length="311" mass="34904">MSGENNSSVTEFILAGLSEQPELQLPLFLLFLGIYVVTVVGNLGMTTLIWLSSHLHTPMYYFLSSLSFIDFCHSTVITPKMLVNFVTEKNIISYPECMTQLYFFLVFAIAECHMLAAMAYDRYMAICSPLLYSVIISNKACFSLILGVYIIGLVCASVHTGCMFRVQFCKFDLINHYFCDLLPLLKLSCSSIYVNKLLILCVGAFNILVPSLTILCSYIFIIASILHIRSTEGRSKAFSTCSSHMLAVVIFFGSAAFMYLQPSSISSMDQGKVSSVFYTIIVPMLNPLIYSLRNKDVHVSLKKMLQRRTLL</sequence>
<gene>
    <name type="primary">OR8G1</name>
    <name type="synonym">OR8G1P</name>
</gene>
<dbReference type="EMBL" id="AB065946">
    <property type="protein sequence ID" value="BAC06159.1"/>
    <property type="molecule type" value="Genomic_DNA"/>
</dbReference>
<dbReference type="EMBL" id="X89672">
    <property type="protein sequence ID" value="CAA61819.1"/>
    <property type="molecule type" value="mRNA"/>
</dbReference>
<dbReference type="EMBL" id="AF399507">
    <property type="protein sequence ID" value="AAK94992.1"/>
    <property type="molecule type" value="Genomic_DNA"/>
</dbReference>
<dbReference type="EMBL" id="BK004423">
    <property type="protein sequence ID" value="DAA04821.1"/>
    <property type="molecule type" value="Genomic_DNA"/>
</dbReference>
<dbReference type="CCDS" id="CCDS73407.1"/>
<dbReference type="PIR" id="S58017">
    <property type="entry name" value="S58017"/>
</dbReference>
<dbReference type="RefSeq" id="NP_001002905.1">
    <property type="nucleotide sequence ID" value="NM_001002905.2"/>
</dbReference>
<dbReference type="SMR" id="Q15617"/>
<dbReference type="BioGRID" id="117704">
    <property type="interactions" value="1"/>
</dbReference>
<dbReference type="FunCoup" id="Q15617">
    <property type="interactions" value="419"/>
</dbReference>
<dbReference type="STRING" id="9606.ENSP00000493289"/>
<dbReference type="GlyCosmos" id="Q15617">
    <property type="glycosylation" value="2 sites, No reported glycans"/>
</dbReference>
<dbReference type="GlyGen" id="Q15617">
    <property type="glycosylation" value="2 sites"/>
</dbReference>
<dbReference type="iPTMnet" id="Q15617"/>
<dbReference type="PhosphoSitePlus" id="Q15617"/>
<dbReference type="BioMuta" id="OR8G1"/>
<dbReference type="DMDM" id="82592515"/>
<dbReference type="MassIVE" id="Q15617"/>
<dbReference type="PaxDb" id="9606-ENSP00000476313"/>
<dbReference type="ProteomicsDB" id="60658"/>
<dbReference type="Antibodypedia" id="72302">
    <property type="antibodies" value="47 antibodies from 15 providers"/>
</dbReference>
<dbReference type="DNASU" id="26494"/>
<dbReference type="Ensembl" id="ENST00000641972.1">
    <property type="protein sequence ID" value="ENSP00000493289.1"/>
    <property type="gene ID" value="ENSG00000197849.7"/>
</dbReference>
<dbReference type="GeneID" id="26494"/>
<dbReference type="KEGG" id="hsa:26494"/>
<dbReference type="MANE-Select" id="ENST00000641972.1">
    <property type="protein sequence ID" value="ENSP00000493289.1"/>
    <property type="RefSeq nucleotide sequence ID" value="NM_001002905.2"/>
    <property type="RefSeq protein sequence ID" value="NP_001002905.1"/>
</dbReference>
<dbReference type="UCSC" id="uc031yin.1">
    <property type="organism name" value="human"/>
</dbReference>
<dbReference type="AGR" id="HGNC:8484"/>
<dbReference type="CTD" id="26494"/>
<dbReference type="GeneCards" id="OR8G1"/>
<dbReference type="HGNC" id="HGNC:8484">
    <property type="gene designation" value="OR8G1"/>
</dbReference>
<dbReference type="HPA" id="ENSG00000197849">
    <property type="expression patterns" value="Not detected"/>
</dbReference>
<dbReference type="neXtProt" id="NX_Q15617"/>
<dbReference type="PharmGKB" id="PA32764"/>
<dbReference type="VEuPathDB" id="HostDB:ENSG00000197849"/>
<dbReference type="eggNOG" id="ENOG502SJS1">
    <property type="taxonomic scope" value="Eukaryota"/>
</dbReference>
<dbReference type="GeneTree" id="ENSGT01040000240383"/>
<dbReference type="HOGENOM" id="CLU_012526_1_0_1"/>
<dbReference type="InParanoid" id="Q15617"/>
<dbReference type="OMA" id="FNVINHY"/>
<dbReference type="OrthoDB" id="9444602at2759"/>
<dbReference type="PAN-GO" id="Q15617">
    <property type="GO annotations" value="4 GO annotations based on evolutionary models"/>
</dbReference>
<dbReference type="PhylomeDB" id="Q15617"/>
<dbReference type="PathwayCommons" id="Q15617"/>
<dbReference type="Reactome" id="R-HSA-9752946">
    <property type="pathway name" value="Expression and translocation of olfactory receptors"/>
</dbReference>
<dbReference type="BioGRID-ORCS" id="26494">
    <property type="hits" value="6 hits in 239 CRISPR screens"/>
</dbReference>
<dbReference type="GeneWiki" id="OR8G1"/>
<dbReference type="GenomeRNAi" id="26494"/>
<dbReference type="Pharos" id="Q15617">
    <property type="development level" value="Tdark"/>
</dbReference>
<dbReference type="PRO" id="PR:Q15617"/>
<dbReference type="Proteomes" id="UP000005640">
    <property type="component" value="Chromosome 11"/>
</dbReference>
<dbReference type="RNAct" id="Q15617">
    <property type="molecule type" value="protein"/>
</dbReference>
<dbReference type="Bgee" id="ENSG00000197849">
    <property type="expression patterns" value="Expressed in male germ line stem cell (sensu Vertebrata) in testis and 2 other cell types or tissues"/>
</dbReference>
<dbReference type="ExpressionAtlas" id="Q15617">
    <property type="expression patterns" value="baseline and differential"/>
</dbReference>
<dbReference type="GO" id="GO:0016020">
    <property type="term" value="C:membrane"/>
    <property type="evidence" value="ECO:0000303"/>
    <property type="project" value="UniProtKB"/>
</dbReference>
<dbReference type="GO" id="GO:0005886">
    <property type="term" value="C:plasma membrane"/>
    <property type="evidence" value="ECO:0007669"/>
    <property type="project" value="UniProtKB-SubCell"/>
</dbReference>
<dbReference type="GO" id="GO:0004930">
    <property type="term" value="F:G protein-coupled receptor activity"/>
    <property type="evidence" value="ECO:0007669"/>
    <property type="project" value="UniProtKB-KW"/>
</dbReference>
<dbReference type="GO" id="GO:0005549">
    <property type="term" value="F:odorant binding"/>
    <property type="evidence" value="ECO:0000318"/>
    <property type="project" value="GO_Central"/>
</dbReference>
<dbReference type="GO" id="GO:0004984">
    <property type="term" value="F:olfactory receptor activity"/>
    <property type="evidence" value="ECO:0000318"/>
    <property type="project" value="GO_Central"/>
</dbReference>
<dbReference type="GO" id="GO:0007186">
    <property type="term" value="P:G protein-coupled receptor signaling pathway"/>
    <property type="evidence" value="ECO:0000318"/>
    <property type="project" value="GO_Central"/>
</dbReference>
<dbReference type="GO" id="GO:0007608">
    <property type="term" value="P:sensory perception of smell"/>
    <property type="evidence" value="ECO:0000318"/>
    <property type="project" value="GO_Central"/>
</dbReference>
<dbReference type="CDD" id="cd15406">
    <property type="entry name" value="7tmA_OR8D-like"/>
    <property type="match status" value="1"/>
</dbReference>
<dbReference type="FunFam" id="1.10.1220.70:FF:000001">
    <property type="entry name" value="Olfactory receptor"/>
    <property type="match status" value="1"/>
</dbReference>
<dbReference type="FunFam" id="1.20.1070.10:FF:000646">
    <property type="entry name" value="Olfactory receptor 887"/>
    <property type="match status" value="1"/>
</dbReference>
<dbReference type="FunFam" id="1.20.1070.10:FF:001035">
    <property type="entry name" value="Putative olfactory receptor"/>
    <property type="match status" value="1"/>
</dbReference>
<dbReference type="Gene3D" id="1.20.1070.10">
    <property type="entry name" value="Rhodopsin 7-helix transmembrane proteins"/>
    <property type="match status" value="1"/>
</dbReference>
<dbReference type="InterPro" id="IPR000276">
    <property type="entry name" value="GPCR_Rhodpsn"/>
</dbReference>
<dbReference type="InterPro" id="IPR017452">
    <property type="entry name" value="GPCR_Rhodpsn_7TM"/>
</dbReference>
<dbReference type="InterPro" id="IPR000725">
    <property type="entry name" value="Olfact_rcpt"/>
</dbReference>
<dbReference type="PANTHER" id="PTHR48018">
    <property type="entry name" value="OLFACTORY RECEPTOR"/>
    <property type="match status" value="1"/>
</dbReference>
<dbReference type="Pfam" id="PF13853">
    <property type="entry name" value="7tm_4"/>
    <property type="match status" value="1"/>
</dbReference>
<dbReference type="PRINTS" id="PR00237">
    <property type="entry name" value="GPCRRHODOPSN"/>
</dbReference>
<dbReference type="PRINTS" id="PR00245">
    <property type="entry name" value="OLFACTORYR"/>
</dbReference>
<dbReference type="SUPFAM" id="SSF81321">
    <property type="entry name" value="Family A G protein-coupled receptor-like"/>
    <property type="match status" value="1"/>
</dbReference>
<dbReference type="PROSITE" id="PS00237">
    <property type="entry name" value="G_PROTEIN_RECEP_F1_1"/>
    <property type="match status" value="1"/>
</dbReference>
<dbReference type="PROSITE" id="PS50262">
    <property type="entry name" value="G_PROTEIN_RECEP_F1_2"/>
    <property type="match status" value="1"/>
</dbReference>
<organism>
    <name type="scientific">Homo sapiens</name>
    <name type="common">Human</name>
    <dbReference type="NCBI Taxonomy" id="9606"/>
    <lineage>
        <taxon>Eukaryota</taxon>
        <taxon>Metazoa</taxon>
        <taxon>Chordata</taxon>
        <taxon>Craniata</taxon>
        <taxon>Vertebrata</taxon>
        <taxon>Euteleostomi</taxon>
        <taxon>Mammalia</taxon>
        <taxon>Eutheria</taxon>
        <taxon>Euarchontoglires</taxon>
        <taxon>Primates</taxon>
        <taxon>Haplorrhini</taxon>
        <taxon>Catarrhini</taxon>
        <taxon>Hominidae</taxon>
        <taxon>Homo</taxon>
    </lineage>
</organism>